<gene>
    <name type="primary">STY-12</name>
</gene>
<protein>
    <recommendedName>
        <fullName>Tyrosine-protein phosphatase 12</fullName>
        <ecNumber>3.1.3.48</ecNumber>
    </recommendedName>
</protein>
<dbReference type="EC" id="3.1.3.48"/>
<dbReference type="EMBL" id="M37997">
    <property type="protein sequence ID" value="AAA29830.1"/>
    <property type="molecule type" value="mRNA"/>
</dbReference>
<dbReference type="SMR" id="P28204"/>
<dbReference type="GO" id="GO:0004725">
    <property type="term" value="F:protein tyrosine phosphatase activity"/>
    <property type="evidence" value="ECO:0007669"/>
    <property type="project" value="UniProtKB-EC"/>
</dbReference>
<dbReference type="CDD" id="cd00047">
    <property type="entry name" value="PTPc"/>
    <property type="match status" value="1"/>
</dbReference>
<dbReference type="Gene3D" id="3.90.190.10">
    <property type="entry name" value="Protein tyrosine phosphatase superfamily"/>
    <property type="match status" value="1"/>
</dbReference>
<dbReference type="InterPro" id="IPR029021">
    <property type="entry name" value="Prot-tyrosine_phosphatase-like"/>
</dbReference>
<dbReference type="InterPro" id="IPR050348">
    <property type="entry name" value="Protein-Tyr_Phosphatase"/>
</dbReference>
<dbReference type="InterPro" id="IPR000242">
    <property type="entry name" value="PTP_cat"/>
</dbReference>
<dbReference type="PANTHER" id="PTHR19134:SF562">
    <property type="entry name" value="PROTEIN-TYROSINE-PHOSPHATASE"/>
    <property type="match status" value="1"/>
</dbReference>
<dbReference type="PANTHER" id="PTHR19134">
    <property type="entry name" value="RECEPTOR-TYPE TYROSINE-PROTEIN PHOSPHATASE"/>
    <property type="match status" value="1"/>
</dbReference>
<dbReference type="Pfam" id="PF00102">
    <property type="entry name" value="Y_phosphatase"/>
    <property type="match status" value="1"/>
</dbReference>
<dbReference type="SUPFAM" id="SSF52799">
    <property type="entry name" value="(Phosphotyrosine protein) phosphatases II"/>
    <property type="match status" value="1"/>
</dbReference>
<dbReference type="PROSITE" id="PS50055">
    <property type="entry name" value="TYR_PHOSPHATASE_PTP"/>
    <property type="match status" value="1"/>
</dbReference>
<comment type="catalytic activity">
    <reaction evidence="3">
        <text>O-phospho-L-tyrosyl-[protein] + H2O = L-tyrosyl-[protein] + phosphate</text>
        <dbReference type="Rhea" id="RHEA:10684"/>
        <dbReference type="Rhea" id="RHEA-COMP:10136"/>
        <dbReference type="Rhea" id="RHEA-COMP:20101"/>
        <dbReference type="ChEBI" id="CHEBI:15377"/>
        <dbReference type="ChEBI" id="CHEBI:43474"/>
        <dbReference type="ChEBI" id="CHEBI:46858"/>
        <dbReference type="ChEBI" id="CHEBI:61978"/>
        <dbReference type="EC" id="3.1.3.48"/>
    </reaction>
</comment>
<comment type="similarity">
    <text evidence="4">Belongs to the protein-tyrosine phosphatase family.</text>
</comment>
<sequence>WRMIWEKRVEAIVMLTNVDENGRRKCEKYWPGDTERGSHGEFEVSCIDNTTLGQIIRRKFKISHQSYPNRTQVVVQYHYTAWPDHGVPQTTSELFNLRRIVRTEF</sequence>
<proteinExistence type="evidence at transcript level"/>
<feature type="chain" id="PRO_0000094900" description="Tyrosine-protein phosphatase 12">
    <location>
        <begin position="1" status="less than"/>
        <end position="105" status="greater than"/>
    </location>
</feature>
<feature type="domain" description="Tyrosine-protein phosphatase" evidence="2">
    <location>
        <begin position="1" status="less than"/>
        <end position="105" status="greater than"/>
    </location>
</feature>
<feature type="binding site" evidence="1">
    <location>
        <position position="84"/>
    </location>
    <ligand>
        <name>substrate</name>
    </ligand>
</feature>
<feature type="non-terminal residue">
    <location>
        <position position="1"/>
    </location>
</feature>
<feature type="non-terminal residue">
    <location>
        <position position="105"/>
    </location>
</feature>
<reference key="1">
    <citation type="journal article" date="1991" name="Immunogenetics">
        <title>Protein tyrosine phosphatase domains from the protochordate Styela plicata.</title>
        <authorList>
            <person name="Matthews R.J."/>
            <person name="Flores E."/>
            <person name="Thomas M.L."/>
        </authorList>
    </citation>
    <scope>NUCLEOTIDE SEQUENCE [MRNA]</scope>
</reference>
<name>PTP12_STYPL</name>
<evidence type="ECO:0000250" key="1"/>
<evidence type="ECO:0000255" key="2">
    <source>
        <dbReference type="PROSITE-ProRule" id="PRU00160"/>
    </source>
</evidence>
<evidence type="ECO:0000255" key="3">
    <source>
        <dbReference type="PROSITE-ProRule" id="PRU10044"/>
    </source>
</evidence>
<evidence type="ECO:0000305" key="4"/>
<organism>
    <name type="scientific">Styela plicata</name>
    <name type="common">Wrinkled sea squirt</name>
    <name type="synonym">Ascidia plicata</name>
    <dbReference type="NCBI Taxonomy" id="7726"/>
    <lineage>
        <taxon>Eukaryota</taxon>
        <taxon>Metazoa</taxon>
        <taxon>Chordata</taxon>
        <taxon>Tunicata</taxon>
        <taxon>Ascidiacea</taxon>
        <taxon>Stolidobranchia</taxon>
        <taxon>Styelidae</taxon>
        <taxon>Styela</taxon>
    </lineage>
</organism>
<accession>P28204</accession>
<keyword id="KW-0378">Hydrolase</keyword>
<keyword id="KW-0904">Protein phosphatase</keyword>